<accession>Q5WJ84</accession>
<sequence length="345" mass="36233">MSNAYKEAGVDIEAGYEAVNRMKRHVERTARKGVLGGLGGFGGNFDLSTLGLKEPVLVSGTDGVGTKLMIAFMANKHDTIGQDAVAMCVNDIVVQGAEPLYFLDYLACGKAVPEKIEAIVKGVADGCEIAGCALIGGETAEMPGMYEEDEYDLAGFSVGAVEKKDLLTGEHIQAGDVLIGLPSSGLHSNGFSLVRKVLLQDAGLTLQTECATLGKTLGEELLTPTKIYVKPLLACLKQGLLAGAAHITGGGFYENIPRMLPKGVGIHIDYGSWPIPPIFSLIQEKGGLSEQDLFHTFNMGIGMVLAVPEDKHQQALATLEANGEDAYIIGRVTPTEGTVIGGIGA</sequence>
<proteinExistence type="inferred from homology"/>
<comment type="catalytic activity">
    <reaction evidence="1">
        <text>2-formamido-N(1)-(5-O-phospho-beta-D-ribosyl)acetamidine + ATP = 5-amino-1-(5-phospho-beta-D-ribosyl)imidazole + ADP + phosphate + H(+)</text>
        <dbReference type="Rhea" id="RHEA:23032"/>
        <dbReference type="ChEBI" id="CHEBI:15378"/>
        <dbReference type="ChEBI" id="CHEBI:30616"/>
        <dbReference type="ChEBI" id="CHEBI:43474"/>
        <dbReference type="ChEBI" id="CHEBI:137981"/>
        <dbReference type="ChEBI" id="CHEBI:147287"/>
        <dbReference type="ChEBI" id="CHEBI:456216"/>
        <dbReference type="EC" id="6.3.3.1"/>
    </reaction>
</comment>
<comment type="pathway">
    <text evidence="1">Purine metabolism; IMP biosynthesis via de novo pathway; 5-amino-1-(5-phospho-D-ribosyl)imidazole from N(2)-formyl-N(1)-(5-phospho-D-ribosyl)glycinamide: step 2/2.</text>
</comment>
<comment type="subcellular location">
    <subcellularLocation>
        <location evidence="1">Cytoplasm</location>
    </subcellularLocation>
</comment>
<comment type="similarity">
    <text evidence="1">Belongs to the AIR synthase family.</text>
</comment>
<organism>
    <name type="scientific">Shouchella clausii (strain KSM-K16)</name>
    <name type="common">Alkalihalobacillus clausii</name>
    <dbReference type="NCBI Taxonomy" id="66692"/>
    <lineage>
        <taxon>Bacteria</taxon>
        <taxon>Bacillati</taxon>
        <taxon>Bacillota</taxon>
        <taxon>Bacilli</taxon>
        <taxon>Bacillales</taxon>
        <taxon>Bacillaceae</taxon>
        <taxon>Shouchella</taxon>
    </lineage>
</organism>
<feature type="chain" id="PRO_0000258330" description="Phosphoribosylformylglycinamidine cyclo-ligase">
    <location>
        <begin position="1"/>
        <end position="345"/>
    </location>
</feature>
<name>PUR5_SHOC1</name>
<dbReference type="EC" id="6.3.3.1" evidence="1"/>
<dbReference type="EMBL" id="AP006627">
    <property type="protein sequence ID" value="BAD63571.1"/>
    <property type="molecule type" value="Genomic_DNA"/>
</dbReference>
<dbReference type="RefSeq" id="WP_011245887.1">
    <property type="nucleotide sequence ID" value="NC_006582.1"/>
</dbReference>
<dbReference type="SMR" id="Q5WJ84"/>
<dbReference type="STRING" id="66692.ABC1032"/>
<dbReference type="KEGG" id="bcl:ABC1032"/>
<dbReference type="eggNOG" id="COG0150">
    <property type="taxonomic scope" value="Bacteria"/>
</dbReference>
<dbReference type="HOGENOM" id="CLU_047116_0_0_9"/>
<dbReference type="OrthoDB" id="9802507at2"/>
<dbReference type="UniPathway" id="UPA00074">
    <property type="reaction ID" value="UER00129"/>
</dbReference>
<dbReference type="Proteomes" id="UP000001168">
    <property type="component" value="Chromosome"/>
</dbReference>
<dbReference type="GO" id="GO:0005829">
    <property type="term" value="C:cytosol"/>
    <property type="evidence" value="ECO:0007669"/>
    <property type="project" value="TreeGrafter"/>
</dbReference>
<dbReference type="GO" id="GO:0005524">
    <property type="term" value="F:ATP binding"/>
    <property type="evidence" value="ECO:0007669"/>
    <property type="project" value="UniProtKB-KW"/>
</dbReference>
<dbReference type="GO" id="GO:0004637">
    <property type="term" value="F:phosphoribosylamine-glycine ligase activity"/>
    <property type="evidence" value="ECO:0007669"/>
    <property type="project" value="TreeGrafter"/>
</dbReference>
<dbReference type="GO" id="GO:0004641">
    <property type="term" value="F:phosphoribosylformylglycinamidine cyclo-ligase activity"/>
    <property type="evidence" value="ECO:0007669"/>
    <property type="project" value="UniProtKB-UniRule"/>
</dbReference>
<dbReference type="GO" id="GO:0006189">
    <property type="term" value="P:'de novo' IMP biosynthetic process"/>
    <property type="evidence" value="ECO:0007669"/>
    <property type="project" value="UniProtKB-UniRule"/>
</dbReference>
<dbReference type="GO" id="GO:0046084">
    <property type="term" value="P:adenine biosynthetic process"/>
    <property type="evidence" value="ECO:0007669"/>
    <property type="project" value="TreeGrafter"/>
</dbReference>
<dbReference type="CDD" id="cd02196">
    <property type="entry name" value="PurM"/>
    <property type="match status" value="1"/>
</dbReference>
<dbReference type="FunFam" id="3.30.1330.10:FF:000001">
    <property type="entry name" value="Phosphoribosylformylglycinamidine cyclo-ligase"/>
    <property type="match status" value="1"/>
</dbReference>
<dbReference type="FunFam" id="3.90.650.10:FF:000001">
    <property type="entry name" value="Phosphoribosylformylglycinamidine cyclo-ligase"/>
    <property type="match status" value="1"/>
</dbReference>
<dbReference type="Gene3D" id="3.90.650.10">
    <property type="entry name" value="PurM-like C-terminal domain"/>
    <property type="match status" value="1"/>
</dbReference>
<dbReference type="Gene3D" id="3.30.1330.10">
    <property type="entry name" value="PurM-like, N-terminal domain"/>
    <property type="match status" value="1"/>
</dbReference>
<dbReference type="HAMAP" id="MF_00741">
    <property type="entry name" value="AIRS"/>
    <property type="match status" value="1"/>
</dbReference>
<dbReference type="InterPro" id="IPR010918">
    <property type="entry name" value="PurM-like_C_dom"/>
</dbReference>
<dbReference type="InterPro" id="IPR036676">
    <property type="entry name" value="PurM-like_C_sf"/>
</dbReference>
<dbReference type="InterPro" id="IPR016188">
    <property type="entry name" value="PurM-like_N"/>
</dbReference>
<dbReference type="InterPro" id="IPR036921">
    <property type="entry name" value="PurM-like_N_sf"/>
</dbReference>
<dbReference type="InterPro" id="IPR004733">
    <property type="entry name" value="PurM_cligase"/>
</dbReference>
<dbReference type="NCBIfam" id="TIGR00878">
    <property type="entry name" value="purM"/>
    <property type="match status" value="1"/>
</dbReference>
<dbReference type="PANTHER" id="PTHR10520:SF12">
    <property type="entry name" value="TRIFUNCTIONAL PURINE BIOSYNTHETIC PROTEIN ADENOSINE-3"/>
    <property type="match status" value="1"/>
</dbReference>
<dbReference type="PANTHER" id="PTHR10520">
    <property type="entry name" value="TRIFUNCTIONAL PURINE BIOSYNTHETIC PROTEIN ADENOSINE-3-RELATED"/>
    <property type="match status" value="1"/>
</dbReference>
<dbReference type="Pfam" id="PF00586">
    <property type="entry name" value="AIRS"/>
    <property type="match status" value="1"/>
</dbReference>
<dbReference type="Pfam" id="PF02769">
    <property type="entry name" value="AIRS_C"/>
    <property type="match status" value="1"/>
</dbReference>
<dbReference type="SUPFAM" id="SSF56042">
    <property type="entry name" value="PurM C-terminal domain-like"/>
    <property type="match status" value="1"/>
</dbReference>
<dbReference type="SUPFAM" id="SSF55326">
    <property type="entry name" value="PurM N-terminal domain-like"/>
    <property type="match status" value="1"/>
</dbReference>
<protein>
    <recommendedName>
        <fullName evidence="1">Phosphoribosylformylglycinamidine cyclo-ligase</fullName>
        <ecNumber evidence="1">6.3.3.1</ecNumber>
    </recommendedName>
    <alternativeName>
        <fullName evidence="1">AIR synthase</fullName>
    </alternativeName>
    <alternativeName>
        <fullName evidence="1">AIRS</fullName>
    </alternativeName>
    <alternativeName>
        <fullName evidence="1">Phosphoribosyl-aminoimidazole synthetase</fullName>
    </alternativeName>
</protein>
<keyword id="KW-0067">ATP-binding</keyword>
<keyword id="KW-0963">Cytoplasm</keyword>
<keyword id="KW-0436">Ligase</keyword>
<keyword id="KW-0547">Nucleotide-binding</keyword>
<keyword id="KW-0658">Purine biosynthesis</keyword>
<keyword id="KW-1185">Reference proteome</keyword>
<reference key="1">
    <citation type="submission" date="2003-10" db="EMBL/GenBank/DDBJ databases">
        <title>The complete genome sequence of the alkaliphilic Bacillus clausii KSM-K16.</title>
        <authorList>
            <person name="Takaki Y."/>
            <person name="Kageyama Y."/>
            <person name="Shimamura S."/>
            <person name="Suzuki H."/>
            <person name="Nishi S."/>
            <person name="Hatada Y."/>
            <person name="Kawai S."/>
            <person name="Ito S."/>
            <person name="Horikoshi K."/>
        </authorList>
    </citation>
    <scope>NUCLEOTIDE SEQUENCE [LARGE SCALE GENOMIC DNA]</scope>
    <source>
        <strain>KSM-K16</strain>
    </source>
</reference>
<evidence type="ECO:0000255" key="1">
    <source>
        <dbReference type="HAMAP-Rule" id="MF_00741"/>
    </source>
</evidence>
<gene>
    <name evidence="1" type="primary">purM</name>
    <name type="ordered locus">ABC1032</name>
</gene>